<gene>
    <name evidence="1" type="primary">guaA</name>
    <name type="ordered locus">cgR_0726</name>
</gene>
<feature type="chain" id="PRO_1000120265" description="GMP synthase [glutamine-hydrolyzing]">
    <location>
        <begin position="1"/>
        <end position="523"/>
    </location>
</feature>
<feature type="domain" description="Glutamine amidotransferase type-1" evidence="1">
    <location>
        <begin position="9"/>
        <end position="198"/>
    </location>
</feature>
<feature type="domain" description="GMPS ATP-PPase" evidence="1">
    <location>
        <begin position="199"/>
        <end position="397"/>
    </location>
</feature>
<feature type="active site" description="Nucleophile" evidence="1">
    <location>
        <position position="86"/>
    </location>
</feature>
<feature type="active site" evidence="1">
    <location>
        <position position="172"/>
    </location>
</feature>
<feature type="active site" evidence="1">
    <location>
        <position position="174"/>
    </location>
</feature>
<feature type="binding site" evidence="1">
    <location>
        <begin position="227"/>
        <end position="233"/>
    </location>
    <ligand>
        <name>ATP</name>
        <dbReference type="ChEBI" id="CHEBI:30616"/>
    </ligand>
</feature>
<name>GUAA_CORGB</name>
<reference key="1">
    <citation type="journal article" date="2007" name="Microbiology">
        <title>Comparative analysis of the Corynebacterium glutamicum group and complete genome sequence of strain R.</title>
        <authorList>
            <person name="Yukawa H."/>
            <person name="Omumasaba C.A."/>
            <person name="Nonaka H."/>
            <person name="Kos P."/>
            <person name="Okai N."/>
            <person name="Suzuki N."/>
            <person name="Suda M."/>
            <person name="Tsuge Y."/>
            <person name="Watanabe J."/>
            <person name="Ikeda Y."/>
            <person name="Vertes A.A."/>
            <person name="Inui M."/>
        </authorList>
    </citation>
    <scope>NUCLEOTIDE SEQUENCE [LARGE SCALE GENOMIC DNA]</scope>
    <source>
        <strain>R</strain>
    </source>
</reference>
<comment type="function">
    <text evidence="1">Catalyzes the synthesis of GMP from XMP.</text>
</comment>
<comment type="catalytic activity">
    <reaction evidence="1">
        <text>XMP + L-glutamine + ATP + H2O = GMP + L-glutamate + AMP + diphosphate + 2 H(+)</text>
        <dbReference type="Rhea" id="RHEA:11680"/>
        <dbReference type="ChEBI" id="CHEBI:15377"/>
        <dbReference type="ChEBI" id="CHEBI:15378"/>
        <dbReference type="ChEBI" id="CHEBI:29985"/>
        <dbReference type="ChEBI" id="CHEBI:30616"/>
        <dbReference type="ChEBI" id="CHEBI:33019"/>
        <dbReference type="ChEBI" id="CHEBI:57464"/>
        <dbReference type="ChEBI" id="CHEBI:58115"/>
        <dbReference type="ChEBI" id="CHEBI:58359"/>
        <dbReference type="ChEBI" id="CHEBI:456215"/>
        <dbReference type="EC" id="6.3.5.2"/>
    </reaction>
</comment>
<comment type="pathway">
    <text evidence="1">Purine metabolism; GMP biosynthesis; GMP from XMP (L-Gln route): step 1/1.</text>
</comment>
<comment type="subunit">
    <text evidence="1">Homodimer.</text>
</comment>
<sequence length="523" mass="55942">MSLQTNHRPVLVVDFGAQYAQLIARRVREAGIYSEVIPHTATADDVRAKNAAALVLSGGPSSVYAEGAPSLDAEILDLGLPVFGICYGFQAMTHALGGTVANTGKREYGRTDINVAGGVLHEGLEACHKVWMSHGDAVSEAPEGFVVTASSEGAPVAAFENKERKMAGVQYHPEVLHSPHGQAVLTRFLTEIAGLEQNWTAANIAEELIEKVREQIGEDGRAICGLSGGVDSAVAGALVQRAIGDRLTCVFVDHGLLRAGEREQVEKDFVAATGAKLVTVDERQAFLSKLAGVTEPEAKRKAIGAEFIRSFERAVAGVLEEAPEGSTVDFLVQGTLYPDVVESGGGSGTANIKSHHNVGGLPDDVEFKLVEPLRDLFKDEVRAVGRELGLPEEIVGRQPFPGPGLGIRIIGEVTEERLETLRHADLIARTELTAAGLDGVIWQCPVVLLADVRSVGVQGDGRTYGHPIVLRPVSSEDAMTADWTRLPYEVLEKISTRITNEVPDVNRVVLDVTSKPPGTIEWE</sequence>
<proteinExistence type="inferred from homology"/>
<organism>
    <name type="scientific">Corynebacterium glutamicum (strain R)</name>
    <dbReference type="NCBI Taxonomy" id="340322"/>
    <lineage>
        <taxon>Bacteria</taxon>
        <taxon>Bacillati</taxon>
        <taxon>Actinomycetota</taxon>
        <taxon>Actinomycetes</taxon>
        <taxon>Mycobacteriales</taxon>
        <taxon>Corynebacteriaceae</taxon>
        <taxon>Corynebacterium</taxon>
    </lineage>
</organism>
<accession>A4QBV0</accession>
<keyword id="KW-0067">ATP-binding</keyword>
<keyword id="KW-0315">Glutamine amidotransferase</keyword>
<keyword id="KW-0332">GMP biosynthesis</keyword>
<keyword id="KW-0436">Ligase</keyword>
<keyword id="KW-0547">Nucleotide-binding</keyword>
<keyword id="KW-0658">Purine biosynthesis</keyword>
<dbReference type="EC" id="6.3.5.2" evidence="1"/>
<dbReference type="EMBL" id="AP009044">
    <property type="protein sequence ID" value="BAF53697.1"/>
    <property type="molecule type" value="Genomic_DNA"/>
</dbReference>
<dbReference type="RefSeq" id="WP_003854578.1">
    <property type="nucleotide sequence ID" value="NC_009342.1"/>
</dbReference>
<dbReference type="SMR" id="A4QBV0"/>
<dbReference type="MEROPS" id="C26.A07"/>
<dbReference type="KEGG" id="cgt:cgR_0726"/>
<dbReference type="HOGENOM" id="CLU_014340_0_5_11"/>
<dbReference type="PhylomeDB" id="A4QBV0"/>
<dbReference type="UniPathway" id="UPA00189">
    <property type="reaction ID" value="UER00296"/>
</dbReference>
<dbReference type="Proteomes" id="UP000006698">
    <property type="component" value="Chromosome"/>
</dbReference>
<dbReference type="GO" id="GO:0005829">
    <property type="term" value="C:cytosol"/>
    <property type="evidence" value="ECO:0007669"/>
    <property type="project" value="TreeGrafter"/>
</dbReference>
<dbReference type="GO" id="GO:0005524">
    <property type="term" value="F:ATP binding"/>
    <property type="evidence" value="ECO:0007669"/>
    <property type="project" value="UniProtKB-UniRule"/>
</dbReference>
<dbReference type="GO" id="GO:0003921">
    <property type="term" value="F:GMP synthase activity"/>
    <property type="evidence" value="ECO:0007669"/>
    <property type="project" value="InterPro"/>
</dbReference>
<dbReference type="CDD" id="cd01742">
    <property type="entry name" value="GATase1_GMP_Synthase"/>
    <property type="match status" value="1"/>
</dbReference>
<dbReference type="CDD" id="cd01997">
    <property type="entry name" value="GMP_synthase_C"/>
    <property type="match status" value="1"/>
</dbReference>
<dbReference type="FunFam" id="3.30.300.10:FF:000002">
    <property type="entry name" value="GMP synthase [glutamine-hydrolyzing]"/>
    <property type="match status" value="1"/>
</dbReference>
<dbReference type="FunFam" id="3.40.50.620:FF:000001">
    <property type="entry name" value="GMP synthase [glutamine-hydrolyzing]"/>
    <property type="match status" value="1"/>
</dbReference>
<dbReference type="FunFam" id="3.40.50.880:FF:000001">
    <property type="entry name" value="GMP synthase [glutamine-hydrolyzing]"/>
    <property type="match status" value="1"/>
</dbReference>
<dbReference type="Gene3D" id="3.30.300.10">
    <property type="match status" value="1"/>
</dbReference>
<dbReference type="Gene3D" id="3.40.50.880">
    <property type="match status" value="1"/>
</dbReference>
<dbReference type="Gene3D" id="3.40.50.620">
    <property type="entry name" value="HUPs"/>
    <property type="match status" value="1"/>
</dbReference>
<dbReference type="HAMAP" id="MF_00344">
    <property type="entry name" value="GMP_synthase"/>
    <property type="match status" value="1"/>
</dbReference>
<dbReference type="InterPro" id="IPR029062">
    <property type="entry name" value="Class_I_gatase-like"/>
</dbReference>
<dbReference type="InterPro" id="IPR017926">
    <property type="entry name" value="GATASE"/>
</dbReference>
<dbReference type="InterPro" id="IPR001674">
    <property type="entry name" value="GMP_synth_C"/>
</dbReference>
<dbReference type="InterPro" id="IPR004739">
    <property type="entry name" value="GMP_synth_GATase"/>
</dbReference>
<dbReference type="InterPro" id="IPR022955">
    <property type="entry name" value="GMP_synthase"/>
</dbReference>
<dbReference type="InterPro" id="IPR025777">
    <property type="entry name" value="GMPS_ATP_PPase_dom"/>
</dbReference>
<dbReference type="InterPro" id="IPR022310">
    <property type="entry name" value="NAD/GMP_synthase"/>
</dbReference>
<dbReference type="InterPro" id="IPR014729">
    <property type="entry name" value="Rossmann-like_a/b/a_fold"/>
</dbReference>
<dbReference type="NCBIfam" id="TIGR00884">
    <property type="entry name" value="guaA_Cterm"/>
    <property type="match status" value="1"/>
</dbReference>
<dbReference type="NCBIfam" id="TIGR00888">
    <property type="entry name" value="guaA_Nterm"/>
    <property type="match status" value="1"/>
</dbReference>
<dbReference type="NCBIfam" id="NF000848">
    <property type="entry name" value="PRK00074.1"/>
    <property type="match status" value="1"/>
</dbReference>
<dbReference type="PANTHER" id="PTHR11922:SF2">
    <property type="entry name" value="GMP SYNTHASE [GLUTAMINE-HYDROLYZING]"/>
    <property type="match status" value="1"/>
</dbReference>
<dbReference type="PANTHER" id="PTHR11922">
    <property type="entry name" value="GMP SYNTHASE-RELATED"/>
    <property type="match status" value="1"/>
</dbReference>
<dbReference type="Pfam" id="PF00117">
    <property type="entry name" value="GATase"/>
    <property type="match status" value="1"/>
</dbReference>
<dbReference type="Pfam" id="PF00958">
    <property type="entry name" value="GMP_synt_C"/>
    <property type="match status" value="1"/>
</dbReference>
<dbReference type="Pfam" id="PF02540">
    <property type="entry name" value="NAD_synthase"/>
    <property type="match status" value="1"/>
</dbReference>
<dbReference type="PRINTS" id="PR00097">
    <property type="entry name" value="ANTSNTHASEII"/>
</dbReference>
<dbReference type="PRINTS" id="PR00096">
    <property type="entry name" value="GATASE"/>
</dbReference>
<dbReference type="SUPFAM" id="SSF52402">
    <property type="entry name" value="Adenine nucleotide alpha hydrolases-like"/>
    <property type="match status" value="1"/>
</dbReference>
<dbReference type="SUPFAM" id="SSF52317">
    <property type="entry name" value="Class I glutamine amidotransferase-like"/>
    <property type="match status" value="1"/>
</dbReference>
<dbReference type="SUPFAM" id="SSF54810">
    <property type="entry name" value="GMP synthetase C-terminal dimerisation domain"/>
    <property type="match status" value="1"/>
</dbReference>
<dbReference type="PROSITE" id="PS51273">
    <property type="entry name" value="GATASE_TYPE_1"/>
    <property type="match status" value="1"/>
</dbReference>
<dbReference type="PROSITE" id="PS51553">
    <property type="entry name" value="GMPS_ATP_PPASE"/>
    <property type="match status" value="1"/>
</dbReference>
<evidence type="ECO:0000255" key="1">
    <source>
        <dbReference type="HAMAP-Rule" id="MF_00344"/>
    </source>
</evidence>
<protein>
    <recommendedName>
        <fullName evidence="1">GMP synthase [glutamine-hydrolyzing]</fullName>
        <ecNumber evidence="1">6.3.5.2</ecNumber>
    </recommendedName>
    <alternativeName>
        <fullName evidence="1">GMP synthetase</fullName>
    </alternativeName>
    <alternativeName>
        <fullName evidence="1">Glutamine amidotransferase</fullName>
    </alternativeName>
</protein>